<comment type="function">
    <text evidence="1">IF-3 binds to the 30S ribosomal subunit and shifts the equilibrium between 70S ribosomes and their 50S and 30S subunits in favor of the free subunits, thus enhancing the availability of 30S subunits on which protein synthesis initiation begins.</text>
</comment>
<comment type="subunit">
    <text evidence="1">Monomer.</text>
</comment>
<comment type="subcellular location">
    <subcellularLocation>
        <location evidence="1">Cytoplasm</location>
    </subcellularLocation>
</comment>
<comment type="similarity">
    <text evidence="1">Belongs to the IF-3 family.</text>
</comment>
<sequence length="164" mass="18749">MRLIGLDGEQLGIVKIADAFRLSEQSDVDLVEIAPNADPPVCRLMDYGKFKYQEQKRQAEARSKQKVIQVKEVKFRPATDEGDYQVKLRNLRRFLEEGDKAKVTLRFRGREMAHQELGMRVLERVRDDLIELAQVEAMPKLEGRQMVMVLAPRKKAVGKPDAAG</sequence>
<proteinExistence type="inferred from homology"/>
<evidence type="ECO:0000255" key="1">
    <source>
        <dbReference type="HAMAP-Rule" id="MF_00080"/>
    </source>
</evidence>
<dbReference type="EMBL" id="BX640443">
    <property type="protein sequence ID" value="CAE32647.1"/>
    <property type="molecule type" value="Genomic_DNA"/>
</dbReference>
<dbReference type="SMR" id="Q7WKF6"/>
<dbReference type="KEGG" id="bbr:BB2151"/>
<dbReference type="eggNOG" id="COG0290">
    <property type="taxonomic scope" value="Bacteria"/>
</dbReference>
<dbReference type="HOGENOM" id="CLU_054919_3_2_4"/>
<dbReference type="Proteomes" id="UP000001027">
    <property type="component" value="Chromosome"/>
</dbReference>
<dbReference type="GO" id="GO:0005829">
    <property type="term" value="C:cytosol"/>
    <property type="evidence" value="ECO:0007669"/>
    <property type="project" value="TreeGrafter"/>
</dbReference>
<dbReference type="GO" id="GO:0016020">
    <property type="term" value="C:membrane"/>
    <property type="evidence" value="ECO:0007669"/>
    <property type="project" value="TreeGrafter"/>
</dbReference>
<dbReference type="GO" id="GO:0043022">
    <property type="term" value="F:ribosome binding"/>
    <property type="evidence" value="ECO:0007669"/>
    <property type="project" value="TreeGrafter"/>
</dbReference>
<dbReference type="GO" id="GO:0003743">
    <property type="term" value="F:translation initiation factor activity"/>
    <property type="evidence" value="ECO:0007669"/>
    <property type="project" value="UniProtKB-UniRule"/>
</dbReference>
<dbReference type="GO" id="GO:0032790">
    <property type="term" value="P:ribosome disassembly"/>
    <property type="evidence" value="ECO:0007669"/>
    <property type="project" value="TreeGrafter"/>
</dbReference>
<dbReference type="FunFam" id="3.30.110.10:FF:000001">
    <property type="entry name" value="Translation initiation factor IF-3"/>
    <property type="match status" value="1"/>
</dbReference>
<dbReference type="Gene3D" id="3.30.110.10">
    <property type="entry name" value="Translation initiation factor 3 (IF-3), C-terminal domain"/>
    <property type="match status" value="1"/>
</dbReference>
<dbReference type="Gene3D" id="3.10.20.80">
    <property type="entry name" value="Translation initiation factor 3 (IF-3), N-terminal domain"/>
    <property type="match status" value="1"/>
</dbReference>
<dbReference type="HAMAP" id="MF_00080">
    <property type="entry name" value="IF_3"/>
    <property type="match status" value="1"/>
</dbReference>
<dbReference type="InterPro" id="IPR036788">
    <property type="entry name" value="T_IF-3_C_sf"/>
</dbReference>
<dbReference type="InterPro" id="IPR036787">
    <property type="entry name" value="T_IF-3_N_sf"/>
</dbReference>
<dbReference type="InterPro" id="IPR019813">
    <property type="entry name" value="Translation_initiation_fac3_CS"/>
</dbReference>
<dbReference type="InterPro" id="IPR001288">
    <property type="entry name" value="Translation_initiation_fac_3"/>
</dbReference>
<dbReference type="InterPro" id="IPR019815">
    <property type="entry name" value="Translation_initiation_fac_3_C"/>
</dbReference>
<dbReference type="InterPro" id="IPR019814">
    <property type="entry name" value="Translation_initiation_fac_3_N"/>
</dbReference>
<dbReference type="NCBIfam" id="TIGR00168">
    <property type="entry name" value="infC"/>
    <property type="match status" value="1"/>
</dbReference>
<dbReference type="PANTHER" id="PTHR10938">
    <property type="entry name" value="TRANSLATION INITIATION FACTOR IF-3"/>
    <property type="match status" value="1"/>
</dbReference>
<dbReference type="PANTHER" id="PTHR10938:SF0">
    <property type="entry name" value="TRANSLATION INITIATION FACTOR IF-3, MITOCHONDRIAL"/>
    <property type="match status" value="1"/>
</dbReference>
<dbReference type="Pfam" id="PF00707">
    <property type="entry name" value="IF3_C"/>
    <property type="match status" value="1"/>
</dbReference>
<dbReference type="Pfam" id="PF05198">
    <property type="entry name" value="IF3_N"/>
    <property type="match status" value="1"/>
</dbReference>
<dbReference type="SUPFAM" id="SSF55200">
    <property type="entry name" value="Translation initiation factor IF3, C-terminal domain"/>
    <property type="match status" value="1"/>
</dbReference>
<dbReference type="SUPFAM" id="SSF54364">
    <property type="entry name" value="Translation initiation factor IF3, N-terminal domain"/>
    <property type="match status" value="1"/>
</dbReference>
<dbReference type="PROSITE" id="PS00938">
    <property type="entry name" value="IF3"/>
    <property type="match status" value="1"/>
</dbReference>
<organism>
    <name type="scientific">Bordetella bronchiseptica (strain ATCC BAA-588 / NCTC 13252 / RB50)</name>
    <name type="common">Alcaligenes bronchisepticus</name>
    <dbReference type="NCBI Taxonomy" id="257310"/>
    <lineage>
        <taxon>Bacteria</taxon>
        <taxon>Pseudomonadati</taxon>
        <taxon>Pseudomonadota</taxon>
        <taxon>Betaproteobacteria</taxon>
        <taxon>Burkholderiales</taxon>
        <taxon>Alcaligenaceae</taxon>
        <taxon>Bordetella</taxon>
    </lineage>
</organism>
<protein>
    <recommendedName>
        <fullName evidence="1">Translation initiation factor IF-3</fullName>
    </recommendedName>
</protein>
<keyword id="KW-0963">Cytoplasm</keyword>
<keyword id="KW-0396">Initiation factor</keyword>
<keyword id="KW-0648">Protein biosynthesis</keyword>
<name>IF3_BORBR</name>
<reference key="1">
    <citation type="journal article" date="2003" name="Nat. Genet.">
        <title>Comparative analysis of the genome sequences of Bordetella pertussis, Bordetella parapertussis and Bordetella bronchiseptica.</title>
        <authorList>
            <person name="Parkhill J."/>
            <person name="Sebaihia M."/>
            <person name="Preston A."/>
            <person name="Murphy L.D."/>
            <person name="Thomson N.R."/>
            <person name="Harris D.E."/>
            <person name="Holden M.T.G."/>
            <person name="Churcher C.M."/>
            <person name="Bentley S.D."/>
            <person name="Mungall K.L."/>
            <person name="Cerdeno-Tarraga A.-M."/>
            <person name="Temple L."/>
            <person name="James K.D."/>
            <person name="Harris B."/>
            <person name="Quail M.A."/>
            <person name="Achtman M."/>
            <person name="Atkin R."/>
            <person name="Baker S."/>
            <person name="Basham D."/>
            <person name="Bason N."/>
            <person name="Cherevach I."/>
            <person name="Chillingworth T."/>
            <person name="Collins M."/>
            <person name="Cronin A."/>
            <person name="Davis P."/>
            <person name="Doggett J."/>
            <person name="Feltwell T."/>
            <person name="Goble A."/>
            <person name="Hamlin N."/>
            <person name="Hauser H."/>
            <person name="Holroyd S."/>
            <person name="Jagels K."/>
            <person name="Leather S."/>
            <person name="Moule S."/>
            <person name="Norberczak H."/>
            <person name="O'Neil S."/>
            <person name="Ormond D."/>
            <person name="Price C."/>
            <person name="Rabbinowitsch E."/>
            <person name="Rutter S."/>
            <person name="Sanders M."/>
            <person name="Saunders D."/>
            <person name="Seeger K."/>
            <person name="Sharp S."/>
            <person name="Simmonds M."/>
            <person name="Skelton J."/>
            <person name="Squares R."/>
            <person name="Squares S."/>
            <person name="Stevens K."/>
            <person name="Unwin L."/>
            <person name="Whitehead S."/>
            <person name="Barrell B.G."/>
            <person name="Maskell D.J."/>
        </authorList>
    </citation>
    <scope>NUCLEOTIDE SEQUENCE [LARGE SCALE GENOMIC DNA]</scope>
    <source>
        <strain>ATCC BAA-588 / NCTC 13252 / RB50</strain>
    </source>
</reference>
<gene>
    <name evidence="1" type="primary">infC</name>
    <name type="ordered locus">BB2151</name>
</gene>
<feature type="chain" id="PRO_0000177486" description="Translation initiation factor IF-3">
    <location>
        <begin position="1"/>
        <end position="164"/>
    </location>
</feature>
<accession>Q7WKF6</accession>